<dbReference type="EC" id="4.3.3.7" evidence="1"/>
<dbReference type="EMBL" id="CP001124">
    <property type="protein sequence ID" value="ACH41044.1"/>
    <property type="molecule type" value="Genomic_DNA"/>
</dbReference>
<dbReference type="RefSeq" id="WP_012532481.1">
    <property type="nucleotide sequence ID" value="NC_011146.1"/>
</dbReference>
<dbReference type="SMR" id="B5EGX4"/>
<dbReference type="STRING" id="404380.Gbem_4054"/>
<dbReference type="KEGG" id="gbm:Gbem_4054"/>
<dbReference type="eggNOG" id="COG0329">
    <property type="taxonomic scope" value="Bacteria"/>
</dbReference>
<dbReference type="HOGENOM" id="CLU_049343_7_1_7"/>
<dbReference type="OrthoDB" id="9782828at2"/>
<dbReference type="UniPathway" id="UPA00034">
    <property type="reaction ID" value="UER00017"/>
</dbReference>
<dbReference type="Proteomes" id="UP000008825">
    <property type="component" value="Chromosome"/>
</dbReference>
<dbReference type="GO" id="GO:0005829">
    <property type="term" value="C:cytosol"/>
    <property type="evidence" value="ECO:0007669"/>
    <property type="project" value="TreeGrafter"/>
</dbReference>
<dbReference type="GO" id="GO:0008840">
    <property type="term" value="F:4-hydroxy-tetrahydrodipicolinate synthase activity"/>
    <property type="evidence" value="ECO:0007669"/>
    <property type="project" value="UniProtKB-UniRule"/>
</dbReference>
<dbReference type="GO" id="GO:0019877">
    <property type="term" value="P:diaminopimelate biosynthetic process"/>
    <property type="evidence" value="ECO:0007669"/>
    <property type="project" value="UniProtKB-UniRule"/>
</dbReference>
<dbReference type="GO" id="GO:0009089">
    <property type="term" value="P:lysine biosynthetic process via diaminopimelate"/>
    <property type="evidence" value="ECO:0007669"/>
    <property type="project" value="UniProtKB-UniRule"/>
</dbReference>
<dbReference type="CDD" id="cd00950">
    <property type="entry name" value="DHDPS"/>
    <property type="match status" value="1"/>
</dbReference>
<dbReference type="Gene3D" id="3.20.20.70">
    <property type="entry name" value="Aldolase class I"/>
    <property type="match status" value="1"/>
</dbReference>
<dbReference type="HAMAP" id="MF_00418">
    <property type="entry name" value="DapA"/>
    <property type="match status" value="1"/>
</dbReference>
<dbReference type="InterPro" id="IPR013785">
    <property type="entry name" value="Aldolase_TIM"/>
</dbReference>
<dbReference type="InterPro" id="IPR005263">
    <property type="entry name" value="DapA"/>
</dbReference>
<dbReference type="InterPro" id="IPR002220">
    <property type="entry name" value="DapA-like"/>
</dbReference>
<dbReference type="InterPro" id="IPR020625">
    <property type="entry name" value="Schiff_base-form_aldolases_AS"/>
</dbReference>
<dbReference type="InterPro" id="IPR020624">
    <property type="entry name" value="Schiff_base-form_aldolases_CS"/>
</dbReference>
<dbReference type="NCBIfam" id="TIGR00674">
    <property type="entry name" value="dapA"/>
    <property type="match status" value="1"/>
</dbReference>
<dbReference type="PANTHER" id="PTHR12128:SF66">
    <property type="entry name" value="4-HYDROXY-2-OXOGLUTARATE ALDOLASE, MITOCHONDRIAL"/>
    <property type="match status" value="1"/>
</dbReference>
<dbReference type="PANTHER" id="PTHR12128">
    <property type="entry name" value="DIHYDRODIPICOLINATE SYNTHASE"/>
    <property type="match status" value="1"/>
</dbReference>
<dbReference type="Pfam" id="PF00701">
    <property type="entry name" value="DHDPS"/>
    <property type="match status" value="1"/>
</dbReference>
<dbReference type="PIRSF" id="PIRSF001365">
    <property type="entry name" value="DHDPS"/>
    <property type="match status" value="1"/>
</dbReference>
<dbReference type="PRINTS" id="PR00146">
    <property type="entry name" value="DHPICSNTHASE"/>
</dbReference>
<dbReference type="SMART" id="SM01130">
    <property type="entry name" value="DHDPS"/>
    <property type="match status" value="1"/>
</dbReference>
<dbReference type="SUPFAM" id="SSF51569">
    <property type="entry name" value="Aldolase"/>
    <property type="match status" value="1"/>
</dbReference>
<dbReference type="PROSITE" id="PS00665">
    <property type="entry name" value="DHDPS_1"/>
    <property type="match status" value="1"/>
</dbReference>
<dbReference type="PROSITE" id="PS00666">
    <property type="entry name" value="DHDPS_2"/>
    <property type="match status" value="1"/>
</dbReference>
<keyword id="KW-0028">Amino-acid biosynthesis</keyword>
<keyword id="KW-0963">Cytoplasm</keyword>
<keyword id="KW-0220">Diaminopimelate biosynthesis</keyword>
<keyword id="KW-0456">Lyase</keyword>
<keyword id="KW-0457">Lysine biosynthesis</keyword>
<keyword id="KW-1185">Reference proteome</keyword>
<keyword id="KW-0704">Schiff base</keyword>
<evidence type="ECO:0000255" key="1">
    <source>
        <dbReference type="HAMAP-Rule" id="MF_00418"/>
    </source>
</evidence>
<evidence type="ECO:0000305" key="2"/>
<organism>
    <name type="scientific">Citrifermentans bemidjiense (strain ATCC BAA-1014 / DSM 16622 / JCM 12645 / Bem)</name>
    <name type="common">Geobacter bemidjiensis</name>
    <dbReference type="NCBI Taxonomy" id="404380"/>
    <lineage>
        <taxon>Bacteria</taxon>
        <taxon>Pseudomonadati</taxon>
        <taxon>Thermodesulfobacteriota</taxon>
        <taxon>Desulfuromonadia</taxon>
        <taxon>Geobacterales</taxon>
        <taxon>Geobacteraceae</taxon>
        <taxon>Citrifermentans</taxon>
    </lineage>
</organism>
<protein>
    <recommendedName>
        <fullName evidence="1">4-hydroxy-tetrahydrodipicolinate synthase</fullName>
        <shortName evidence="1">HTPA synthase</shortName>
        <ecNumber evidence="1">4.3.3.7</ecNumber>
    </recommendedName>
</protein>
<name>DAPA_CITBB</name>
<proteinExistence type="inferred from homology"/>
<gene>
    <name evidence="1" type="primary">dapA</name>
    <name type="ordered locus">Gbem_4054</name>
</gene>
<comment type="function">
    <text evidence="1">Catalyzes the condensation of (S)-aspartate-beta-semialdehyde [(S)-ASA] and pyruvate to 4-hydroxy-tetrahydrodipicolinate (HTPA).</text>
</comment>
<comment type="catalytic activity">
    <reaction evidence="1">
        <text>L-aspartate 4-semialdehyde + pyruvate = (2S,4S)-4-hydroxy-2,3,4,5-tetrahydrodipicolinate + H2O + H(+)</text>
        <dbReference type="Rhea" id="RHEA:34171"/>
        <dbReference type="ChEBI" id="CHEBI:15361"/>
        <dbReference type="ChEBI" id="CHEBI:15377"/>
        <dbReference type="ChEBI" id="CHEBI:15378"/>
        <dbReference type="ChEBI" id="CHEBI:67139"/>
        <dbReference type="ChEBI" id="CHEBI:537519"/>
        <dbReference type="EC" id="4.3.3.7"/>
    </reaction>
</comment>
<comment type="pathway">
    <text evidence="1">Amino-acid biosynthesis; L-lysine biosynthesis via DAP pathway; (S)-tetrahydrodipicolinate from L-aspartate: step 3/4.</text>
</comment>
<comment type="subunit">
    <text evidence="1">Homotetramer; dimer of dimers.</text>
</comment>
<comment type="subcellular location">
    <subcellularLocation>
        <location evidence="1">Cytoplasm</location>
    </subcellularLocation>
</comment>
<comment type="similarity">
    <text evidence="1">Belongs to the DapA family.</text>
</comment>
<comment type="caution">
    <text evidence="2">Was originally thought to be a dihydrodipicolinate synthase (DHDPS), catalyzing the condensation of (S)-aspartate-beta-semialdehyde [(S)-ASA] and pyruvate to dihydrodipicolinate (DHDP). However, it was shown in E.coli that the product of the enzymatic reaction is not dihydrodipicolinate but in fact (4S)-4-hydroxy-2,3,4,5-tetrahydro-(2S)-dipicolinic acid (HTPA), and that the consecutive dehydration reaction leading to DHDP is not spontaneous but catalyzed by DapB.</text>
</comment>
<accession>B5EGX4</accession>
<feature type="chain" id="PRO_1000124036" description="4-hydroxy-tetrahydrodipicolinate synthase">
    <location>
        <begin position="1"/>
        <end position="290"/>
    </location>
</feature>
<feature type="active site" description="Proton donor/acceptor" evidence="1">
    <location>
        <position position="132"/>
    </location>
</feature>
<feature type="active site" description="Schiff-base intermediate with substrate" evidence="1">
    <location>
        <position position="160"/>
    </location>
</feature>
<feature type="binding site" evidence="1">
    <location>
        <position position="44"/>
    </location>
    <ligand>
        <name>pyruvate</name>
        <dbReference type="ChEBI" id="CHEBI:15361"/>
    </ligand>
</feature>
<feature type="binding site" evidence="1">
    <location>
        <position position="202"/>
    </location>
    <ligand>
        <name>pyruvate</name>
        <dbReference type="ChEBI" id="CHEBI:15361"/>
    </ligand>
</feature>
<feature type="site" description="Part of a proton relay during catalysis" evidence="1">
    <location>
        <position position="43"/>
    </location>
</feature>
<feature type="site" description="Part of a proton relay during catalysis" evidence="1">
    <location>
        <position position="106"/>
    </location>
</feature>
<sequence>MFQGSIVAIVTPFKNGAVDEEKLRELVEFQIENGTDAIVPCGTTGESSTLSYVEHDRVIQVVVEQVNKRVPVIAGTGSNSTHEAIEITQHAKELGADGALLVTPYYNKPSQEGLFRHYKAVADAVALPQILYNVPGRTGVNLLPETVARLSVHQNIVAIKEATGSLQQASEVLALCGDKIDVLSGDDFITLPIMAAGGKGVISVTANIMPKEVSSLVDAFNAGNMEEARRLHLYLLKISNAMFIESNPVPVKAAVSLMGKCSSEVRLPLAPLMEANLAKLTAIMKEYKLI</sequence>
<reference key="1">
    <citation type="submission" date="2008-07" db="EMBL/GenBank/DDBJ databases">
        <title>Complete sequence of Geobacter bemidjiensis BEM.</title>
        <authorList>
            <consortium name="US DOE Joint Genome Institute"/>
            <person name="Lucas S."/>
            <person name="Copeland A."/>
            <person name="Lapidus A."/>
            <person name="Glavina del Rio T."/>
            <person name="Dalin E."/>
            <person name="Tice H."/>
            <person name="Bruce D."/>
            <person name="Goodwin L."/>
            <person name="Pitluck S."/>
            <person name="Kiss H."/>
            <person name="Brettin T."/>
            <person name="Detter J.C."/>
            <person name="Han C."/>
            <person name="Kuske C.R."/>
            <person name="Schmutz J."/>
            <person name="Larimer F."/>
            <person name="Land M."/>
            <person name="Hauser L."/>
            <person name="Kyrpides N."/>
            <person name="Lykidis A."/>
            <person name="Lovley D."/>
            <person name="Richardson P."/>
        </authorList>
    </citation>
    <scope>NUCLEOTIDE SEQUENCE [LARGE SCALE GENOMIC DNA]</scope>
    <source>
        <strain>ATCC BAA-1014 / DSM 16622 / JCM 12645 / Bem</strain>
    </source>
</reference>